<accession>C5BMS3</accession>
<reference key="1">
    <citation type="journal article" date="2009" name="PLoS ONE">
        <title>The complete genome of Teredinibacter turnerae T7901: an intracellular endosymbiont of marine wood-boring bivalves (shipworms).</title>
        <authorList>
            <person name="Yang J.C."/>
            <person name="Madupu R."/>
            <person name="Durkin A.S."/>
            <person name="Ekborg N.A."/>
            <person name="Pedamallu C.S."/>
            <person name="Hostetler J.B."/>
            <person name="Radune D."/>
            <person name="Toms B.S."/>
            <person name="Henrissat B."/>
            <person name="Coutinho P.M."/>
            <person name="Schwarz S."/>
            <person name="Field L."/>
            <person name="Trindade-Silva A.E."/>
            <person name="Soares C.A.G."/>
            <person name="Elshahawi S."/>
            <person name="Hanora A."/>
            <person name="Schmidt E.W."/>
            <person name="Haygood M.G."/>
            <person name="Posfai J."/>
            <person name="Benner J."/>
            <person name="Madinger C."/>
            <person name="Nove J."/>
            <person name="Anton B."/>
            <person name="Chaudhary K."/>
            <person name="Foster J."/>
            <person name="Holman A."/>
            <person name="Kumar S."/>
            <person name="Lessard P.A."/>
            <person name="Luyten Y.A."/>
            <person name="Slatko B."/>
            <person name="Wood N."/>
            <person name="Wu B."/>
            <person name="Teplitski M."/>
            <person name="Mougous J.D."/>
            <person name="Ward N."/>
            <person name="Eisen J.A."/>
            <person name="Badger J.H."/>
            <person name="Distel D.L."/>
        </authorList>
    </citation>
    <scope>NUCLEOTIDE SEQUENCE [LARGE SCALE GENOMIC DNA]</scope>
    <source>
        <strain>ATCC 39867 / T7901</strain>
    </source>
</reference>
<protein>
    <recommendedName>
        <fullName evidence="1">Cell division protein FtsB</fullName>
    </recommendedName>
</protein>
<sequence length="91" mass="10534">MKWLVAVLVVFVAMFQYRLWVGEGSIADVVRLEREIARQEADNERLRERNKQLAAEVDALKTGDDAIEERARSDMGMIKEGETFFMIIDDQ</sequence>
<dbReference type="EMBL" id="CP001614">
    <property type="protein sequence ID" value="ACR14511.1"/>
    <property type="molecule type" value="Genomic_DNA"/>
</dbReference>
<dbReference type="RefSeq" id="WP_015820625.1">
    <property type="nucleotide sequence ID" value="NC_012997.1"/>
</dbReference>
<dbReference type="SMR" id="C5BMS3"/>
<dbReference type="STRING" id="377629.TERTU_2836"/>
<dbReference type="GeneID" id="93856034"/>
<dbReference type="KEGG" id="ttu:TERTU_2836"/>
<dbReference type="eggNOG" id="COG2919">
    <property type="taxonomic scope" value="Bacteria"/>
</dbReference>
<dbReference type="HOGENOM" id="CLU_134863_5_0_6"/>
<dbReference type="OrthoDB" id="7061211at2"/>
<dbReference type="Proteomes" id="UP000009080">
    <property type="component" value="Chromosome"/>
</dbReference>
<dbReference type="GO" id="GO:0032153">
    <property type="term" value="C:cell division site"/>
    <property type="evidence" value="ECO:0007669"/>
    <property type="project" value="UniProtKB-UniRule"/>
</dbReference>
<dbReference type="GO" id="GO:0030428">
    <property type="term" value="C:cell septum"/>
    <property type="evidence" value="ECO:0007669"/>
    <property type="project" value="TreeGrafter"/>
</dbReference>
<dbReference type="GO" id="GO:0005886">
    <property type="term" value="C:plasma membrane"/>
    <property type="evidence" value="ECO:0007669"/>
    <property type="project" value="UniProtKB-SubCell"/>
</dbReference>
<dbReference type="GO" id="GO:0043093">
    <property type="term" value="P:FtsZ-dependent cytokinesis"/>
    <property type="evidence" value="ECO:0007669"/>
    <property type="project" value="UniProtKB-UniRule"/>
</dbReference>
<dbReference type="HAMAP" id="MF_00599">
    <property type="entry name" value="FtsB"/>
    <property type="match status" value="1"/>
</dbReference>
<dbReference type="InterPro" id="IPR023081">
    <property type="entry name" value="Cell_div_FtsB"/>
</dbReference>
<dbReference type="InterPro" id="IPR007060">
    <property type="entry name" value="FtsL/DivIC"/>
</dbReference>
<dbReference type="NCBIfam" id="NF002058">
    <property type="entry name" value="PRK00888.1"/>
    <property type="match status" value="1"/>
</dbReference>
<dbReference type="PANTHER" id="PTHR37485">
    <property type="entry name" value="CELL DIVISION PROTEIN FTSB"/>
    <property type="match status" value="1"/>
</dbReference>
<dbReference type="PANTHER" id="PTHR37485:SF1">
    <property type="entry name" value="CELL DIVISION PROTEIN FTSB"/>
    <property type="match status" value="1"/>
</dbReference>
<dbReference type="Pfam" id="PF04977">
    <property type="entry name" value="DivIC"/>
    <property type="match status" value="1"/>
</dbReference>
<comment type="function">
    <text evidence="1">Essential cell division protein. May link together the upstream cell division proteins, which are predominantly cytoplasmic, with the downstream cell division proteins, which are predominantly periplasmic.</text>
</comment>
<comment type="subunit">
    <text evidence="1">Part of a complex composed of FtsB, FtsL and FtsQ.</text>
</comment>
<comment type="subcellular location">
    <subcellularLocation>
        <location evidence="1">Cell inner membrane</location>
        <topology evidence="1">Single-pass type II membrane protein</topology>
    </subcellularLocation>
    <text evidence="1">Localizes to the division septum.</text>
</comment>
<comment type="similarity">
    <text evidence="1">Belongs to the FtsB family.</text>
</comment>
<gene>
    <name evidence="1" type="primary">ftsB</name>
    <name type="ordered locus">TERTU_2836</name>
</gene>
<organism>
    <name type="scientific">Teredinibacter turnerae (strain ATCC 39867 / T7901)</name>
    <dbReference type="NCBI Taxonomy" id="377629"/>
    <lineage>
        <taxon>Bacteria</taxon>
        <taxon>Pseudomonadati</taxon>
        <taxon>Pseudomonadota</taxon>
        <taxon>Gammaproteobacteria</taxon>
        <taxon>Cellvibrionales</taxon>
        <taxon>Cellvibrionaceae</taxon>
        <taxon>Teredinibacter</taxon>
    </lineage>
</organism>
<name>FTSB_TERTT</name>
<feature type="chain" id="PRO_1000212189" description="Cell division protein FtsB">
    <location>
        <begin position="1"/>
        <end position="91"/>
    </location>
</feature>
<feature type="topological domain" description="Cytoplasmic" evidence="1">
    <location>
        <begin position="1"/>
        <end position="3"/>
    </location>
</feature>
<feature type="transmembrane region" description="Helical" evidence="1">
    <location>
        <begin position="4"/>
        <end position="21"/>
    </location>
</feature>
<feature type="topological domain" description="Periplasmic" evidence="1">
    <location>
        <begin position="22"/>
        <end position="91"/>
    </location>
</feature>
<feature type="coiled-coil region" evidence="1">
    <location>
        <begin position="23"/>
        <end position="63"/>
    </location>
</feature>
<evidence type="ECO:0000255" key="1">
    <source>
        <dbReference type="HAMAP-Rule" id="MF_00599"/>
    </source>
</evidence>
<proteinExistence type="inferred from homology"/>
<keyword id="KW-0131">Cell cycle</keyword>
<keyword id="KW-0132">Cell division</keyword>
<keyword id="KW-0997">Cell inner membrane</keyword>
<keyword id="KW-1003">Cell membrane</keyword>
<keyword id="KW-0175">Coiled coil</keyword>
<keyword id="KW-0472">Membrane</keyword>
<keyword id="KW-1185">Reference proteome</keyword>
<keyword id="KW-0812">Transmembrane</keyword>
<keyword id="KW-1133">Transmembrane helix</keyword>